<reference key="1">
    <citation type="journal article" date="2012" name="Stand. Genomic Sci.">
        <title>Complete genome sequence of Polynucleobacter necessarius subsp. asymbioticus type strain (QLW-P1DMWA-1(T)).</title>
        <authorList>
            <person name="Meincke L."/>
            <person name="Copeland A."/>
            <person name="Lapidus A."/>
            <person name="Lucas S."/>
            <person name="Berry K.W."/>
            <person name="Del Rio T.G."/>
            <person name="Hammon N."/>
            <person name="Dalin E."/>
            <person name="Tice H."/>
            <person name="Pitluck S."/>
            <person name="Richardson P."/>
            <person name="Bruce D."/>
            <person name="Goodwin L."/>
            <person name="Han C."/>
            <person name="Tapia R."/>
            <person name="Detter J.C."/>
            <person name="Schmutz J."/>
            <person name="Brettin T."/>
            <person name="Larimer F."/>
            <person name="Land M."/>
            <person name="Hauser L."/>
            <person name="Kyrpides N.C."/>
            <person name="Ivanova N."/>
            <person name="Goker M."/>
            <person name="Woyke T."/>
            <person name="Wu Q.L."/>
            <person name="Pockl M."/>
            <person name="Hahn M.W."/>
            <person name="Klenk H.P."/>
        </authorList>
    </citation>
    <scope>NUCLEOTIDE SEQUENCE [LARGE SCALE GENOMIC DNA]</scope>
    <source>
        <strain>DSM 18221 / CIP 109841 / QLW-P1DMWA-1</strain>
    </source>
</reference>
<protein>
    <recommendedName>
        <fullName evidence="1">Protein translocase subunit SecA</fullName>
        <ecNumber evidence="1">7.4.2.8</ecNumber>
    </recommendedName>
</protein>
<gene>
    <name evidence="1" type="primary">secA</name>
    <name type="ordered locus">Pnuc_0176</name>
</gene>
<feature type="chain" id="PRO_1000087324" description="Protein translocase subunit SecA">
    <location>
        <begin position="1"/>
        <end position="921"/>
    </location>
</feature>
<feature type="region of interest" description="Disordered" evidence="2">
    <location>
        <begin position="872"/>
        <end position="901"/>
    </location>
</feature>
<feature type="binding site" evidence="1">
    <location>
        <position position="87"/>
    </location>
    <ligand>
        <name>ATP</name>
        <dbReference type="ChEBI" id="CHEBI:30616"/>
    </ligand>
</feature>
<feature type="binding site" evidence="1">
    <location>
        <begin position="105"/>
        <end position="109"/>
    </location>
    <ligand>
        <name>ATP</name>
        <dbReference type="ChEBI" id="CHEBI:30616"/>
    </ligand>
</feature>
<feature type="binding site" evidence="1">
    <location>
        <position position="515"/>
    </location>
    <ligand>
        <name>ATP</name>
        <dbReference type="ChEBI" id="CHEBI:30616"/>
    </ligand>
</feature>
<feature type="binding site" evidence="1">
    <location>
        <position position="905"/>
    </location>
    <ligand>
        <name>Zn(2+)</name>
        <dbReference type="ChEBI" id="CHEBI:29105"/>
    </ligand>
</feature>
<feature type="binding site" evidence="1">
    <location>
        <position position="907"/>
    </location>
    <ligand>
        <name>Zn(2+)</name>
        <dbReference type="ChEBI" id="CHEBI:29105"/>
    </ligand>
</feature>
<feature type="binding site" evidence="1">
    <location>
        <position position="916"/>
    </location>
    <ligand>
        <name>Zn(2+)</name>
        <dbReference type="ChEBI" id="CHEBI:29105"/>
    </ligand>
</feature>
<feature type="binding site" evidence="1">
    <location>
        <position position="917"/>
    </location>
    <ligand>
        <name>Zn(2+)</name>
        <dbReference type="ChEBI" id="CHEBI:29105"/>
    </ligand>
</feature>
<organism>
    <name type="scientific">Polynucleobacter asymbioticus (strain DSM 18221 / CIP 109841 / QLW-P1DMWA-1)</name>
    <name type="common">Polynucleobacter necessarius subsp. asymbioticus</name>
    <dbReference type="NCBI Taxonomy" id="312153"/>
    <lineage>
        <taxon>Bacteria</taxon>
        <taxon>Pseudomonadati</taxon>
        <taxon>Pseudomonadota</taxon>
        <taxon>Betaproteobacteria</taxon>
        <taxon>Burkholderiales</taxon>
        <taxon>Burkholderiaceae</taxon>
        <taxon>Polynucleobacter</taxon>
    </lineage>
</organism>
<keyword id="KW-0067">ATP-binding</keyword>
<keyword id="KW-0997">Cell inner membrane</keyword>
<keyword id="KW-1003">Cell membrane</keyword>
<keyword id="KW-0963">Cytoplasm</keyword>
<keyword id="KW-0472">Membrane</keyword>
<keyword id="KW-0479">Metal-binding</keyword>
<keyword id="KW-0547">Nucleotide-binding</keyword>
<keyword id="KW-0653">Protein transport</keyword>
<keyword id="KW-1185">Reference proteome</keyword>
<keyword id="KW-1278">Translocase</keyword>
<keyword id="KW-0811">Translocation</keyword>
<keyword id="KW-0813">Transport</keyword>
<keyword id="KW-0862">Zinc</keyword>
<sequence length="921" mass="102890">MVIGLLKTLVGSRNDRLLKQYRKVVAKVGTFEANLQTLDDAALAAKTDEFKSRLASGESLDSIAPEAFAVVREASVRVMKMRHFDAQLMGGLALHQGKIAEMGTGEGKTLTATLPVYLNALTGKGVHVVTVNDYLAQRDAEWMSTLYNFLGMKVGVNLSQMDHTTKKEAYAADITYGTNNEFGFDYLRDNMVQDLEQRVQRGLAYAIVDEVDSILIDEARTPLIISGQADDHTDLYIKINALPSHLELQIGEEKSDGTGVEKPGDYWVDEKSQQVYLTERGHDKAEEVLVQLGALDDGASLYAPQNITLMHHVYAALRAHTLYHRDQQYVVQNGEVIIVDEFTGRLMQGRRWSDGLHQAVEAKEGVAIQNENQTLATITFQNYFRMYGKLAGMTGTADTEAYEFKEIYNLETVVIPPNRISQRKDKQDQIYKSSRERYDAVIKDIEDCYQRGQPVLVGTTSIENSELIAGLLDKRKLPHQVLNAKQHAREAEIIAQAGRPKMITIATNMAGRGTDIVLGGNVGKQSSLIQVDEALSDLEKAAKIKSLQDEWQSIHDQVLTAGGLHIIGTERHESRRIDNQLRGRSGRQGDPGSSRFYLSLDDPLLRIFAGDRLRAVMERLKMPDGEPIEAGMVTRSIESAQRKVEGRNFDIRKQLLEYDDVANDQRKETYRLRNEVLESADIGELIANLREDVLRTICSIYVPLESMEEQWDLAGLEHALASEWGLKVDLQKWVEGSDSVDDVEIVDRVLEAAKESYDAKVDLSGRQSFAGFERSVLLYSVDTHWREHLAALDHLRQGIHLRGYAQKDPKQEYRREAFELYGELLNVIKNDVVKNIMTVEIRSASELDQAAESMNEDLAKLSDVQYQHADPDMEVAGSTGDRGAALDIQPAPVRSGPKIGRNDPCSCGSGKKYKNCCGALS</sequence>
<dbReference type="EC" id="7.4.2.8" evidence="1"/>
<dbReference type="EMBL" id="CP000655">
    <property type="protein sequence ID" value="ABP33397.1"/>
    <property type="molecule type" value="Genomic_DNA"/>
</dbReference>
<dbReference type="RefSeq" id="WP_011902022.1">
    <property type="nucleotide sequence ID" value="NC_009379.1"/>
</dbReference>
<dbReference type="SMR" id="A4SV83"/>
<dbReference type="GeneID" id="31480525"/>
<dbReference type="KEGG" id="pnu:Pnuc_0176"/>
<dbReference type="eggNOG" id="COG0653">
    <property type="taxonomic scope" value="Bacteria"/>
</dbReference>
<dbReference type="HOGENOM" id="CLU_005314_3_0_4"/>
<dbReference type="Proteomes" id="UP000000231">
    <property type="component" value="Chromosome"/>
</dbReference>
<dbReference type="GO" id="GO:0031522">
    <property type="term" value="C:cell envelope Sec protein transport complex"/>
    <property type="evidence" value="ECO:0007669"/>
    <property type="project" value="TreeGrafter"/>
</dbReference>
<dbReference type="GO" id="GO:0005829">
    <property type="term" value="C:cytosol"/>
    <property type="evidence" value="ECO:0007669"/>
    <property type="project" value="TreeGrafter"/>
</dbReference>
<dbReference type="GO" id="GO:0005886">
    <property type="term" value="C:plasma membrane"/>
    <property type="evidence" value="ECO:0007669"/>
    <property type="project" value="UniProtKB-SubCell"/>
</dbReference>
<dbReference type="GO" id="GO:0005524">
    <property type="term" value="F:ATP binding"/>
    <property type="evidence" value="ECO:0007669"/>
    <property type="project" value="UniProtKB-UniRule"/>
</dbReference>
<dbReference type="GO" id="GO:0046872">
    <property type="term" value="F:metal ion binding"/>
    <property type="evidence" value="ECO:0007669"/>
    <property type="project" value="UniProtKB-KW"/>
</dbReference>
<dbReference type="GO" id="GO:0008564">
    <property type="term" value="F:protein-exporting ATPase activity"/>
    <property type="evidence" value="ECO:0007669"/>
    <property type="project" value="UniProtKB-EC"/>
</dbReference>
<dbReference type="GO" id="GO:0065002">
    <property type="term" value="P:intracellular protein transmembrane transport"/>
    <property type="evidence" value="ECO:0007669"/>
    <property type="project" value="UniProtKB-UniRule"/>
</dbReference>
<dbReference type="GO" id="GO:0017038">
    <property type="term" value="P:protein import"/>
    <property type="evidence" value="ECO:0007669"/>
    <property type="project" value="InterPro"/>
</dbReference>
<dbReference type="GO" id="GO:0006605">
    <property type="term" value="P:protein targeting"/>
    <property type="evidence" value="ECO:0007669"/>
    <property type="project" value="UniProtKB-UniRule"/>
</dbReference>
<dbReference type="GO" id="GO:0043952">
    <property type="term" value="P:protein transport by the Sec complex"/>
    <property type="evidence" value="ECO:0007669"/>
    <property type="project" value="TreeGrafter"/>
</dbReference>
<dbReference type="CDD" id="cd17928">
    <property type="entry name" value="DEXDc_SecA"/>
    <property type="match status" value="1"/>
</dbReference>
<dbReference type="CDD" id="cd18803">
    <property type="entry name" value="SF2_C_secA"/>
    <property type="match status" value="1"/>
</dbReference>
<dbReference type="FunFam" id="3.40.50.300:FF:000113">
    <property type="entry name" value="Preprotein translocase subunit SecA"/>
    <property type="match status" value="1"/>
</dbReference>
<dbReference type="FunFam" id="3.90.1440.10:FF:000001">
    <property type="entry name" value="Preprotein translocase subunit SecA"/>
    <property type="match status" value="1"/>
</dbReference>
<dbReference type="FunFam" id="1.10.3060.10:FF:000003">
    <property type="entry name" value="Protein translocase subunit SecA"/>
    <property type="match status" value="1"/>
</dbReference>
<dbReference type="Gene3D" id="1.10.3060.10">
    <property type="entry name" value="Helical scaffold and wing domains of SecA"/>
    <property type="match status" value="1"/>
</dbReference>
<dbReference type="Gene3D" id="3.40.50.300">
    <property type="entry name" value="P-loop containing nucleotide triphosphate hydrolases"/>
    <property type="match status" value="2"/>
</dbReference>
<dbReference type="Gene3D" id="3.90.1440.10">
    <property type="entry name" value="SecA, preprotein cross-linking domain"/>
    <property type="match status" value="1"/>
</dbReference>
<dbReference type="HAMAP" id="MF_01382">
    <property type="entry name" value="SecA"/>
    <property type="match status" value="1"/>
</dbReference>
<dbReference type="InterPro" id="IPR014001">
    <property type="entry name" value="Helicase_ATP-bd"/>
</dbReference>
<dbReference type="InterPro" id="IPR001650">
    <property type="entry name" value="Helicase_C-like"/>
</dbReference>
<dbReference type="InterPro" id="IPR027417">
    <property type="entry name" value="P-loop_NTPase"/>
</dbReference>
<dbReference type="InterPro" id="IPR004027">
    <property type="entry name" value="SEC_C_motif"/>
</dbReference>
<dbReference type="InterPro" id="IPR000185">
    <property type="entry name" value="SecA"/>
</dbReference>
<dbReference type="InterPro" id="IPR020937">
    <property type="entry name" value="SecA_CS"/>
</dbReference>
<dbReference type="InterPro" id="IPR011115">
    <property type="entry name" value="SecA_DEAD"/>
</dbReference>
<dbReference type="InterPro" id="IPR014018">
    <property type="entry name" value="SecA_motor_DEAD"/>
</dbReference>
<dbReference type="InterPro" id="IPR011130">
    <property type="entry name" value="SecA_preprotein_X-link_dom"/>
</dbReference>
<dbReference type="InterPro" id="IPR044722">
    <property type="entry name" value="SecA_SF2_C"/>
</dbReference>
<dbReference type="InterPro" id="IPR011116">
    <property type="entry name" value="SecA_Wing/Scaffold"/>
</dbReference>
<dbReference type="InterPro" id="IPR036266">
    <property type="entry name" value="SecA_Wing/Scaffold_sf"/>
</dbReference>
<dbReference type="InterPro" id="IPR036670">
    <property type="entry name" value="SecA_X-link_sf"/>
</dbReference>
<dbReference type="NCBIfam" id="NF009538">
    <property type="entry name" value="PRK12904.1"/>
    <property type="match status" value="1"/>
</dbReference>
<dbReference type="NCBIfam" id="TIGR00963">
    <property type="entry name" value="secA"/>
    <property type="match status" value="1"/>
</dbReference>
<dbReference type="PANTHER" id="PTHR30612:SF0">
    <property type="entry name" value="CHLOROPLAST PROTEIN-TRANSPORTING ATPASE"/>
    <property type="match status" value="1"/>
</dbReference>
<dbReference type="PANTHER" id="PTHR30612">
    <property type="entry name" value="SECA INNER MEMBRANE COMPONENT OF SEC PROTEIN SECRETION SYSTEM"/>
    <property type="match status" value="1"/>
</dbReference>
<dbReference type="Pfam" id="PF21090">
    <property type="entry name" value="P-loop_SecA"/>
    <property type="match status" value="1"/>
</dbReference>
<dbReference type="Pfam" id="PF02810">
    <property type="entry name" value="SEC-C"/>
    <property type="match status" value="1"/>
</dbReference>
<dbReference type="Pfam" id="PF07517">
    <property type="entry name" value="SecA_DEAD"/>
    <property type="match status" value="1"/>
</dbReference>
<dbReference type="Pfam" id="PF01043">
    <property type="entry name" value="SecA_PP_bind"/>
    <property type="match status" value="1"/>
</dbReference>
<dbReference type="Pfam" id="PF07516">
    <property type="entry name" value="SecA_SW"/>
    <property type="match status" value="1"/>
</dbReference>
<dbReference type="PRINTS" id="PR00906">
    <property type="entry name" value="SECA"/>
</dbReference>
<dbReference type="SMART" id="SM00957">
    <property type="entry name" value="SecA_DEAD"/>
    <property type="match status" value="1"/>
</dbReference>
<dbReference type="SMART" id="SM00958">
    <property type="entry name" value="SecA_PP_bind"/>
    <property type="match status" value="1"/>
</dbReference>
<dbReference type="SUPFAM" id="SSF81886">
    <property type="entry name" value="Helical scaffold and wing domains of SecA"/>
    <property type="match status" value="1"/>
</dbReference>
<dbReference type="SUPFAM" id="SSF52540">
    <property type="entry name" value="P-loop containing nucleoside triphosphate hydrolases"/>
    <property type="match status" value="2"/>
</dbReference>
<dbReference type="SUPFAM" id="SSF81767">
    <property type="entry name" value="Pre-protein crosslinking domain of SecA"/>
    <property type="match status" value="1"/>
</dbReference>
<dbReference type="PROSITE" id="PS01312">
    <property type="entry name" value="SECA"/>
    <property type="match status" value="1"/>
</dbReference>
<dbReference type="PROSITE" id="PS51196">
    <property type="entry name" value="SECA_MOTOR_DEAD"/>
    <property type="match status" value="1"/>
</dbReference>
<evidence type="ECO:0000255" key="1">
    <source>
        <dbReference type="HAMAP-Rule" id="MF_01382"/>
    </source>
</evidence>
<evidence type="ECO:0000256" key="2">
    <source>
        <dbReference type="SAM" id="MobiDB-lite"/>
    </source>
</evidence>
<proteinExistence type="inferred from homology"/>
<comment type="function">
    <text evidence="1">Part of the Sec protein translocase complex. Interacts with the SecYEG preprotein conducting channel. Has a central role in coupling the hydrolysis of ATP to the transfer of proteins into and across the cell membrane, serving both as a receptor for the preprotein-SecB complex and as an ATP-driven molecular motor driving the stepwise translocation of polypeptide chains across the membrane.</text>
</comment>
<comment type="catalytic activity">
    <reaction evidence="1">
        <text>ATP + H2O + cellular proteinSide 1 = ADP + phosphate + cellular proteinSide 2.</text>
        <dbReference type="EC" id="7.4.2.8"/>
    </reaction>
</comment>
<comment type="cofactor">
    <cofactor evidence="1">
        <name>Zn(2+)</name>
        <dbReference type="ChEBI" id="CHEBI:29105"/>
    </cofactor>
    <text evidence="1">May bind 1 zinc ion per subunit.</text>
</comment>
<comment type="subunit">
    <text evidence="1">Monomer and homodimer. Part of the essential Sec protein translocation apparatus which comprises SecA, SecYEG and auxiliary proteins SecDF-YajC and YidC.</text>
</comment>
<comment type="subcellular location">
    <subcellularLocation>
        <location evidence="1">Cell inner membrane</location>
        <topology evidence="1">Peripheral membrane protein</topology>
        <orientation evidence="1">Cytoplasmic side</orientation>
    </subcellularLocation>
    <subcellularLocation>
        <location evidence="1">Cytoplasm</location>
    </subcellularLocation>
    <text evidence="1">Distribution is 50-50.</text>
</comment>
<comment type="similarity">
    <text evidence="1">Belongs to the SecA family.</text>
</comment>
<name>SECA_POLAQ</name>
<accession>A4SV83</accession>